<keyword id="KW-1015">Disulfide bond</keyword>
<keyword id="KW-0378">Hydrolase</keyword>
<keyword id="KW-1185">Reference proteome</keyword>
<keyword id="KW-0964">Secreted</keyword>
<keyword id="KW-0719">Serine esterase</keyword>
<keyword id="KW-0732">Signal</keyword>
<organism>
    <name type="scientific">Mycobacterium bovis (strain ATCC BAA-935 / AF2122/97)</name>
    <dbReference type="NCBI Taxonomy" id="233413"/>
    <lineage>
        <taxon>Bacteria</taxon>
        <taxon>Bacillati</taxon>
        <taxon>Actinomycetota</taxon>
        <taxon>Actinomycetes</taxon>
        <taxon>Mycobacteriales</taxon>
        <taxon>Mycobacteriaceae</taxon>
        <taxon>Mycobacterium</taxon>
        <taxon>Mycobacterium tuberculosis complex</taxon>
    </lineage>
</organism>
<accession>P63882</accession>
<accession>A0A1R3Y1K6</accession>
<accession>Q50664</accession>
<accession>X2BKP1</accession>
<comment type="subcellular location">
    <subcellularLocation>
        <location evidence="2">Secreted</location>
    </subcellularLocation>
    <subcellularLocation>
        <location evidence="2">Cell surface</location>
    </subcellularLocation>
</comment>
<comment type="PTM">
    <text evidence="4">Predicted to be exported by the Tat system. The position of the signal peptide cleavage has not been experimentally proven.</text>
</comment>
<comment type="similarity">
    <text evidence="5">Belongs to the cutinase family.</text>
</comment>
<reference key="1">
    <citation type="journal article" date="2003" name="Proc. Natl. Acad. Sci. U.S.A.">
        <title>The complete genome sequence of Mycobacterium bovis.</title>
        <authorList>
            <person name="Garnier T."/>
            <person name="Eiglmeier K."/>
            <person name="Camus J.-C."/>
            <person name="Medina N."/>
            <person name="Mansoor H."/>
            <person name="Pryor M."/>
            <person name="Duthoy S."/>
            <person name="Grondin S."/>
            <person name="Lacroix C."/>
            <person name="Monsempe C."/>
            <person name="Simon S."/>
            <person name="Harris B."/>
            <person name="Atkin R."/>
            <person name="Doggett J."/>
            <person name="Mayes R."/>
            <person name="Keating L."/>
            <person name="Wheeler P.R."/>
            <person name="Parkhill J."/>
            <person name="Barrell B.G."/>
            <person name="Cole S.T."/>
            <person name="Gordon S.V."/>
            <person name="Hewinson R.G."/>
        </authorList>
    </citation>
    <scope>NUCLEOTIDE SEQUENCE [LARGE SCALE GENOMIC DNA]</scope>
    <source>
        <strain>ATCC BAA-935 / AF2122/97</strain>
    </source>
</reference>
<reference key="2">
    <citation type="journal article" date="2017" name="Genome Announc.">
        <title>Updated reference genome sequence and annotation of Mycobacterium bovis AF2122/97.</title>
        <authorList>
            <person name="Malone K.M."/>
            <person name="Farrell D."/>
            <person name="Stuber T.P."/>
            <person name="Schubert O.T."/>
            <person name="Aebersold R."/>
            <person name="Robbe-Austerman S."/>
            <person name="Gordon S.V."/>
        </authorList>
    </citation>
    <scope>NUCLEOTIDE SEQUENCE [LARGE SCALE GENOMIC DNA]</scope>
    <scope>GENOME REANNOTATION</scope>
    <source>
        <strain>ATCC BAA-935 / AF2122/97</strain>
    </source>
</reference>
<feature type="signal peptide" description="Tat-type signal" evidence="4">
    <location>
        <begin position="1"/>
        <end position="32"/>
    </location>
</feature>
<feature type="chain" id="PRO_0000006448" description="Probable carboxylesterase Culp2">
    <location>
        <begin position="33"/>
        <end position="230"/>
    </location>
</feature>
<feature type="active site" description="Nucleophile" evidence="1">
    <location>
        <position position="123"/>
    </location>
</feature>
<feature type="active site" evidence="1">
    <location>
        <position position="189"/>
    </location>
</feature>
<feature type="active site" description="Proton donor/acceptor" evidence="1">
    <location>
        <position position="207"/>
    </location>
</feature>
<feature type="disulfide bond" evidence="1">
    <location>
        <begin position="45"/>
        <end position="112"/>
    </location>
</feature>
<feature type="disulfide bond" evidence="1">
    <location>
        <begin position="185"/>
        <end position="192"/>
    </location>
</feature>
<sequence length="230" mass="23926">MNDLLTRRLLTMGAAAAMLAAVLLLTPITVPAGYPGAVAPATAACPDAEVVFARGRFEPPGIGTVGNAFVSALRSKVNKNVGVYAVKYPADNQIDVGANDMSAHIQSMANSCPNTRLVPGGYSLGAAVTDVVLAVPTQMWGFTNPLPPGSDEHIAAVALFGNGSQWVGPITNFSPAYNDRTIELCHGDDPVCHPADPNTWEANWPQHLAGAYVSSGMVNQAADFVAGKLQ</sequence>
<proteinExistence type="inferred from homology"/>
<gene>
    <name type="primary">cut2</name>
    <name type="ordered locus">BQ2027_MB2323</name>
</gene>
<evidence type="ECO:0000250" key="1">
    <source>
        <dbReference type="UniProtKB" id="O53581"/>
    </source>
</evidence>
<evidence type="ECO:0000250" key="2">
    <source>
        <dbReference type="UniProtKB" id="P9WP41"/>
    </source>
</evidence>
<evidence type="ECO:0000250" key="3">
    <source>
        <dbReference type="UniProtKB" id="P9WP43"/>
    </source>
</evidence>
<evidence type="ECO:0000255" key="4">
    <source>
        <dbReference type="PROSITE-ProRule" id="PRU00648"/>
    </source>
</evidence>
<evidence type="ECO:0000305" key="5"/>
<protein>
    <recommendedName>
        <fullName evidence="2">Probable carboxylesterase Culp2</fullName>
        <ecNumber evidence="3">3.1.1.-</ecNumber>
    </recommendedName>
    <alternativeName>
        <fullName evidence="2">Cutinase-like protein 2</fullName>
        <shortName evidence="2">Culp2</shortName>
    </alternativeName>
</protein>
<name>CULP2_MYCBO</name>
<dbReference type="EC" id="3.1.1.-" evidence="3"/>
<dbReference type="EMBL" id="LT708304">
    <property type="protein sequence ID" value="SIU00935.1"/>
    <property type="molecule type" value="Genomic_DNA"/>
</dbReference>
<dbReference type="RefSeq" id="NP_855972.1">
    <property type="nucleotide sequence ID" value="NC_002945.3"/>
</dbReference>
<dbReference type="RefSeq" id="WP_003411863.1">
    <property type="nucleotide sequence ID" value="NC_002945.4"/>
</dbReference>
<dbReference type="SMR" id="P63882"/>
<dbReference type="ESTHER" id="myctu-cutas2">
    <property type="family name" value="Cutinase"/>
</dbReference>
<dbReference type="KEGG" id="mbo:BQ2027_MB2323"/>
<dbReference type="PATRIC" id="fig|233413.5.peg.2547"/>
<dbReference type="Proteomes" id="UP000001419">
    <property type="component" value="Chromosome"/>
</dbReference>
<dbReference type="GO" id="GO:0009986">
    <property type="term" value="C:cell surface"/>
    <property type="evidence" value="ECO:0007669"/>
    <property type="project" value="UniProtKB-SubCell"/>
</dbReference>
<dbReference type="GO" id="GO:0005576">
    <property type="term" value="C:extracellular region"/>
    <property type="evidence" value="ECO:0007669"/>
    <property type="project" value="UniProtKB-SubCell"/>
</dbReference>
<dbReference type="GO" id="GO:0052689">
    <property type="term" value="F:carboxylic ester hydrolase activity"/>
    <property type="evidence" value="ECO:0007669"/>
    <property type="project" value="UniProtKB-KW"/>
</dbReference>
<dbReference type="FunFam" id="3.40.50.1820:FF:000176">
    <property type="entry name" value="Cutinase Cut4"/>
    <property type="match status" value="1"/>
</dbReference>
<dbReference type="Gene3D" id="3.40.50.1820">
    <property type="entry name" value="alpha/beta hydrolase"/>
    <property type="match status" value="1"/>
</dbReference>
<dbReference type="InterPro" id="IPR029058">
    <property type="entry name" value="AB_hydrolase_fold"/>
</dbReference>
<dbReference type="InterPro" id="IPR000675">
    <property type="entry name" value="Cutinase/axe"/>
</dbReference>
<dbReference type="InterPro" id="IPR043580">
    <property type="entry name" value="CUTINASE_1"/>
</dbReference>
<dbReference type="InterPro" id="IPR006311">
    <property type="entry name" value="TAT_signal"/>
</dbReference>
<dbReference type="PANTHER" id="PTHR33630:SF9">
    <property type="entry name" value="CUTINASE 4"/>
    <property type="match status" value="1"/>
</dbReference>
<dbReference type="PANTHER" id="PTHR33630">
    <property type="entry name" value="CUTINASE RV1984C-RELATED-RELATED"/>
    <property type="match status" value="1"/>
</dbReference>
<dbReference type="Pfam" id="PF01083">
    <property type="entry name" value="Cutinase"/>
    <property type="match status" value="1"/>
</dbReference>
<dbReference type="SMART" id="SM01110">
    <property type="entry name" value="Cutinase"/>
    <property type="match status" value="1"/>
</dbReference>
<dbReference type="SUPFAM" id="SSF53474">
    <property type="entry name" value="alpha/beta-Hydrolases"/>
    <property type="match status" value="1"/>
</dbReference>
<dbReference type="PROSITE" id="PS00155">
    <property type="entry name" value="CUTINASE_1"/>
    <property type="match status" value="1"/>
</dbReference>
<dbReference type="PROSITE" id="PS51318">
    <property type="entry name" value="TAT"/>
    <property type="match status" value="1"/>
</dbReference>